<reference evidence="8 10" key="1">
    <citation type="submission" date="2000-05" db="EMBL/GenBank/DDBJ databases">
        <title>The zebrafish homolog of the human pKU-alpha protein kinase.</title>
        <authorList>
            <person name="Chou C.-M."/>
            <person name="Lee I.-L."/>
            <person name="Leu J.-H."/>
            <person name="Huang C.-J."/>
        </authorList>
    </citation>
    <scope>NUCLEOTIDE SEQUENCE [MRNA] (ISOFORM 1)</scope>
</reference>
<reference evidence="8 10" key="2">
    <citation type="submission" date="2007-11" db="EMBL/GenBank/DDBJ databases">
        <authorList>
            <consortium name="NIH - Zebrafish Gene Collection (ZGC) project"/>
        </authorList>
    </citation>
    <scope>NUCLEOTIDE SEQUENCE [LARGE SCALE MRNA] (ISOFORMS 1 AND 2)</scope>
    <source>
        <strain evidence="9">AB</strain>
    </source>
</reference>
<sequence length="697" mass="79305">MMEELHSLDPRRQELLEARFTGVGVAKGSGHNESSNQSLCSVGSLSDKELETPEKKSNDQRTRKRKGDPFDSQGKGGGRGHKISDYFEFAGGSGTGTSPARGIPPVARSSPQHSLSNPPAAVQQGSPSSISSVNTDHSHTSTSHKPASIHTQHRASQSELTMEKLAALESSKSSDLEKKEGRIDDLLRVNCDLRRQIDEQQKMLEWCKERLNKCVTMSKKLLIEKSKQEKIACREKSMQDRLRLGHFTTVRHGASFTEQWTDGYAFQNLVKQQERVNGQREEIERQRKLLIKKKPPSASQTPPPNLEPNKRKSKSNGAENEMLSLAEYHEQEEIFKLRLGHLKKEEAEIQVELERLERVRNLHIRELKRIHNEDNSQFKDHPTLNDRYLLLHLLGRGGFSEVYKAFDLTEQRYVAVKIHQLNKNWRDEKKENYHKHACREYRIHKELDHPRIVKLYDYFSLDTDSFCTVLEYCEGNDLDFYLKQHKLMSEKEARSIIMQVVNALKYLNEIRPPIIHYDLKPGNILLVNGTACGEIKITDFGLSKIMDDDNYGVDGMELTSQGAGTYWYLPPECFVVGKEPPKISNKVDVWSVGVIFYQCLYGKKPFGHNQSQQDILQENTILKATEVQFPPKPGVSPEAKAFIRRCLVYRKEDRIDVHQLASDPYLLPHIRKSVAATGNSSMAVASTSNSSNSSASN</sequence>
<dbReference type="EC" id="2.7.11.1" evidence="1"/>
<dbReference type="EMBL" id="AF265344">
    <property type="protein sequence ID" value="AAK52417.1"/>
    <property type="molecule type" value="mRNA"/>
</dbReference>
<dbReference type="EMBL" id="BC117634">
    <property type="protein sequence ID" value="AAI17635.1"/>
    <property type="molecule type" value="mRNA"/>
</dbReference>
<dbReference type="EMBL" id="BC154737">
    <property type="protein sequence ID" value="AAI54738.1"/>
    <property type="molecule type" value="mRNA"/>
</dbReference>
<dbReference type="EMBL" id="BC171502">
    <property type="protein sequence ID" value="AAI71502.1"/>
    <property type="molecule type" value="mRNA"/>
</dbReference>
<dbReference type="RefSeq" id="NP_001103887.1">
    <property type="nucleotide sequence ID" value="NM_001110417.1"/>
</dbReference>
<dbReference type="RefSeq" id="XP_005163931.1">
    <property type="nucleotide sequence ID" value="XM_005163874.3"/>
</dbReference>
<dbReference type="RefSeq" id="XP_021325815.1">
    <molecule id="Q1ECX4-2"/>
    <property type="nucleotide sequence ID" value="XM_021470140.2"/>
</dbReference>
<dbReference type="SMR" id="Q1ECX4"/>
<dbReference type="BioGRID" id="91510">
    <property type="interactions" value="1"/>
</dbReference>
<dbReference type="FunCoup" id="Q1ECX4">
    <property type="interactions" value="2255"/>
</dbReference>
<dbReference type="STRING" id="7955.ENSDARP00000003372"/>
<dbReference type="PaxDb" id="7955-ENSDARP00000003372"/>
<dbReference type="Ensembl" id="ENSDART00000006490">
    <molecule id="Q1ECX4-1"/>
    <property type="protein sequence ID" value="ENSDARP00000003372"/>
    <property type="gene ID" value="ENSDARG00000010779"/>
</dbReference>
<dbReference type="Ensembl" id="ENSDART00000141937">
    <molecule id="Q1ECX4-1"/>
    <property type="protein sequence ID" value="ENSDARP00000114778"/>
    <property type="gene ID" value="ENSDARG00000010779"/>
</dbReference>
<dbReference type="GeneID" id="407732"/>
<dbReference type="KEGG" id="dre:407732"/>
<dbReference type="AGR" id="ZFIN:ZDB-GENE-060623-36"/>
<dbReference type="CTD" id="11011"/>
<dbReference type="ZFIN" id="ZDB-GENE-060623-36">
    <property type="gene designation" value="tlk2"/>
</dbReference>
<dbReference type="eggNOG" id="KOG1151">
    <property type="taxonomic scope" value="Eukaryota"/>
</dbReference>
<dbReference type="HOGENOM" id="CLU_000288_85_1_1"/>
<dbReference type="InParanoid" id="Q1ECX4"/>
<dbReference type="OMA" id="REYKVHR"/>
<dbReference type="OrthoDB" id="346907at2759"/>
<dbReference type="PhylomeDB" id="Q1ECX4"/>
<dbReference type="TreeFam" id="TF315233"/>
<dbReference type="PRO" id="PR:Q1ECX4"/>
<dbReference type="Proteomes" id="UP000000437">
    <property type="component" value="Alternate scaffold 3"/>
</dbReference>
<dbReference type="Proteomes" id="UP000000437">
    <property type="component" value="Chromosome 3"/>
</dbReference>
<dbReference type="Bgee" id="ENSDARG00000010779">
    <property type="expression patterns" value="Expressed in early embryo and 28 other cell types or tissues"/>
</dbReference>
<dbReference type="GO" id="GO:0005856">
    <property type="term" value="C:cytoskeleton"/>
    <property type="evidence" value="ECO:0007669"/>
    <property type="project" value="UniProtKB-SubCell"/>
</dbReference>
<dbReference type="GO" id="GO:0005654">
    <property type="term" value="C:nucleoplasm"/>
    <property type="evidence" value="ECO:0007669"/>
    <property type="project" value="UniProtKB-SubCell"/>
</dbReference>
<dbReference type="GO" id="GO:0005634">
    <property type="term" value="C:nucleus"/>
    <property type="evidence" value="ECO:0000318"/>
    <property type="project" value="GO_Central"/>
</dbReference>
<dbReference type="GO" id="GO:0048471">
    <property type="term" value="C:perinuclear region of cytoplasm"/>
    <property type="evidence" value="ECO:0000318"/>
    <property type="project" value="GO_Central"/>
</dbReference>
<dbReference type="GO" id="GO:0005524">
    <property type="term" value="F:ATP binding"/>
    <property type="evidence" value="ECO:0007669"/>
    <property type="project" value="UniProtKB-KW"/>
</dbReference>
<dbReference type="GO" id="GO:0106310">
    <property type="term" value="F:protein serine kinase activity"/>
    <property type="evidence" value="ECO:0007669"/>
    <property type="project" value="RHEA"/>
</dbReference>
<dbReference type="GO" id="GO:0004674">
    <property type="term" value="F:protein serine/threonine kinase activity"/>
    <property type="evidence" value="ECO:0000318"/>
    <property type="project" value="GO_Central"/>
</dbReference>
<dbReference type="GO" id="GO:0007059">
    <property type="term" value="P:chromosome segregation"/>
    <property type="evidence" value="ECO:0000318"/>
    <property type="project" value="GO_Central"/>
</dbReference>
<dbReference type="GO" id="GO:0035556">
    <property type="term" value="P:intracellular signal transduction"/>
    <property type="evidence" value="ECO:0000318"/>
    <property type="project" value="GO_Central"/>
</dbReference>
<dbReference type="FunFam" id="1.10.510.10:FF:000037">
    <property type="entry name" value="Serine/threonine-protein kinase tousled-like 2"/>
    <property type="match status" value="1"/>
</dbReference>
<dbReference type="Gene3D" id="1.10.510.10">
    <property type="entry name" value="Transferase(Phosphotransferase) domain 1"/>
    <property type="match status" value="1"/>
</dbReference>
<dbReference type="InterPro" id="IPR011009">
    <property type="entry name" value="Kinase-like_dom_sf"/>
</dbReference>
<dbReference type="InterPro" id="IPR000719">
    <property type="entry name" value="Prot_kinase_dom"/>
</dbReference>
<dbReference type="InterPro" id="IPR017441">
    <property type="entry name" value="Protein_kinase_ATP_BS"/>
</dbReference>
<dbReference type="InterPro" id="IPR008271">
    <property type="entry name" value="Ser/Thr_kinase_AS"/>
</dbReference>
<dbReference type="PANTHER" id="PTHR22974">
    <property type="entry name" value="MIXED LINEAGE PROTEIN KINASE"/>
    <property type="match status" value="1"/>
</dbReference>
<dbReference type="PANTHER" id="PTHR22974:SF20">
    <property type="entry name" value="SERINE_THREONINE-PROTEIN KINASE TOUSLED-LIKE 2"/>
    <property type="match status" value="1"/>
</dbReference>
<dbReference type="Pfam" id="PF00069">
    <property type="entry name" value="Pkinase"/>
    <property type="match status" value="1"/>
</dbReference>
<dbReference type="SMART" id="SM00220">
    <property type="entry name" value="S_TKc"/>
    <property type="match status" value="1"/>
</dbReference>
<dbReference type="SUPFAM" id="SSF56112">
    <property type="entry name" value="Protein kinase-like (PK-like)"/>
    <property type="match status" value="1"/>
</dbReference>
<dbReference type="PROSITE" id="PS00107">
    <property type="entry name" value="PROTEIN_KINASE_ATP"/>
    <property type="match status" value="1"/>
</dbReference>
<dbReference type="PROSITE" id="PS50011">
    <property type="entry name" value="PROTEIN_KINASE_DOM"/>
    <property type="match status" value="1"/>
</dbReference>
<dbReference type="PROSITE" id="PS00108">
    <property type="entry name" value="PROTEIN_KINASE_ST"/>
    <property type="match status" value="1"/>
</dbReference>
<accession>Q1ECX4</accession>
<accession>A8WGJ6</accession>
<accession>Q90ZY7</accession>
<gene>
    <name evidence="11" type="primary">tlk2</name>
    <name type="ORF">zgc:136697</name>
</gene>
<evidence type="ECO:0000250" key="1">
    <source>
        <dbReference type="UniProtKB" id="Q86UE8"/>
    </source>
</evidence>
<evidence type="ECO:0000255" key="2"/>
<evidence type="ECO:0000255" key="3">
    <source>
        <dbReference type="PROSITE-ProRule" id="PRU00159"/>
    </source>
</evidence>
<evidence type="ECO:0000255" key="4">
    <source>
        <dbReference type="PROSITE-ProRule" id="PRU10027"/>
    </source>
</evidence>
<evidence type="ECO:0000256" key="5">
    <source>
        <dbReference type="SAM" id="MobiDB-lite"/>
    </source>
</evidence>
<evidence type="ECO:0000269" key="6">
    <source ref="1"/>
</evidence>
<evidence type="ECO:0000303" key="7">
    <source ref="2"/>
</evidence>
<evidence type="ECO:0000305" key="8"/>
<evidence type="ECO:0000312" key="9">
    <source>
        <dbReference type="EMBL" id="AAI54738.1"/>
    </source>
</evidence>
<evidence type="ECO:0000312" key="10">
    <source>
        <dbReference type="EMBL" id="AAK52417.1"/>
    </source>
</evidence>
<evidence type="ECO:0000312" key="11">
    <source>
        <dbReference type="ZFIN" id="ZDB-GENE-060623-36"/>
    </source>
</evidence>
<name>TLK2_DANRE</name>
<comment type="function">
    <text evidence="1">Serine/threonine-protein kinase involved in the process of chromatin assembly and probably also DNA replication, transcription, repair, and chromosome segregation (By similarity). Negative regulator of amino acid starvation-induced autophagy (By similarity).</text>
</comment>
<comment type="catalytic activity">
    <reaction evidence="1">
        <text>L-seryl-[protein] + ATP = O-phospho-L-seryl-[protein] + ADP + H(+)</text>
        <dbReference type="Rhea" id="RHEA:17989"/>
        <dbReference type="Rhea" id="RHEA-COMP:9863"/>
        <dbReference type="Rhea" id="RHEA-COMP:11604"/>
        <dbReference type="ChEBI" id="CHEBI:15378"/>
        <dbReference type="ChEBI" id="CHEBI:29999"/>
        <dbReference type="ChEBI" id="CHEBI:30616"/>
        <dbReference type="ChEBI" id="CHEBI:83421"/>
        <dbReference type="ChEBI" id="CHEBI:456216"/>
        <dbReference type="EC" id="2.7.11.1"/>
    </reaction>
</comment>
<comment type="catalytic activity">
    <reaction evidence="1">
        <text>L-threonyl-[protein] + ATP = O-phospho-L-threonyl-[protein] + ADP + H(+)</text>
        <dbReference type="Rhea" id="RHEA:46608"/>
        <dbReference type="Rhea" id="RHEA-COMP:11060"/>
        <dbReference type="Rhea" id="RHEA-COMP:11605"/>
        <dbReference type="ChEBI" id="CHEBI:15378"/>
        <dbReference type="ChEBI" id="CHEBI:30013"/>
        <dbReference type="ChEBI" id="CHEBI:30616"/>
        <dbReference type="ChEBI" id="CHEBI:61977"/>
        <dbReference type="ChEBI" id="CHEBI:456216"/>
        <dbReference type="EC" id="2.7.11.1"/>
    </reaction>
</comment>
<comment type="cofactor">
    <cofactor evidence="1">
        <name>Mg(2+)</name>
        <dbReference type="ChEBI" id="CHEBI:18420"/>
    </cofactor>
</comment>
<comment type="subunit">
    <text evidence="1">Monomer (By similarity). May form homodimers; homodimerization may enhance autophosphoylation and enzymatic activity (By similarity). Heterodimer with TLK1 (By similarity).</text>
</comment>
<comment type="subcellular location">
    <subcellularLocation>
        <location evidence="1">Nucleus</location>
    </subcellularLocation>
    <subcellularLocation>
        <location evidence="1">Nucleus</location>
        <location evidence="1">Nucleoplasm</location>
    </subcellularLocation>
    <subcellularLocation>
        <location evidence="1">Cytoplasm</location>
        <location evidence="1">Perinuclear region</location>
    </subcellularLocation>
    <subcellularLocation>
        <location evidence="1">Cytoplasm</location>
        <location evidence="1">Cytoskeleton</location>
    </subcellularLocation>
    <text evidence="1">Colocalizes with the cytoplasmic intermediate filament system during the G1 phase of the cell cycle (By similarity). Present in the perinuclear region at S phase and in the nucleus at late G2 (By similarity).</text>
</comment>
<comment type="alternative products">
    <event type="alternative splicing"/>
    <isoform>
        <id>Q1ECX4-1</id>
        <name evidence="6">1</name>
        <sequence type="displayed"/>
    </isoform>
    <isoform>
        <id>Q1ECX4-2</id>
        <name>2</name>
        <sequence type="described" ref="VSP_053052"/>
    </isoform>
</comment>
<comment type="PTM">
    <text evidence="1">Phosphorylated (By similarity). Autophosphorylated; phosphorylation promotes the assembly of higher order oligomers and enzymatic activity (By similarity).</text>
</comment>
<comment type="similarity">
    <text evidence="3">Belongs to the protein kinase superfamily. Ser/Thr protein kinase family.</text>
</comment>
<keyword id="KW-0025">Alternative splicing</keyword>
<keyword id="KW-0067">ATP-binding</keyword>
<keyword id="KW-0175">Coiled coil</keyword>
<keyword id="KW-0963">Cytoplasm</keyword>
<keyword id="KW-0206">Cytoskeleton</keyword>
<keyword id="KW-0418">Kinase</keyword>
<keyword id="KW-0547">Nucleotide-binding</keyword>
<keyword id="KW-0539">Nucleus</keyword>
<keyword id="KW-1185">Reference proteome</keyword>
<keyword id="KW-0723">Serine/threonine-protein kinase</keyword>
<keyword id="KW-0808">Transferase</keyword>
<feature type="chain" id="PRO_0000367033" description="Serine/threonine-protein kinase tousled-like 2">
    <location>
        <begin position="1"/>
        <end position="697"/>
    </location>
</feature>
<feature type="domain" description="Protein kinase" evidence="3">
    <location>
        <begin position="388"/>
        <end position="666"/>
    </location>
</feature>
<feature type="region of interest" description="Disordered" evidence="5">
    <location>
        <begin position="25"/>
        <end position="159"/>
    </location>
</feature>
<feature type="region of interest" description="Disordered" evidence="5">
    <location>
        <begin position="288"/>
        <end position="316"/>
    </location>
</feature>
<feature type="coiled-coil region" evidence="2">
    <location>
        <begin position="265"/>
        <end position="294"/>
    </location>
</feature>
<feature type="coiled-coil region" evidence="2">
    <location>
        <begin position="336"/>
        <end position="373"/>
    </location>
</feature>
<feature type="compositionally biased region" description="Polar residues" evidence="5">
    <location>
        <begin position="31"/>
        <end position="44"/>
    </location>
</feature>
<feature type="compositionally biased region" description="Basic and acidic residues" evidence="5">
    <location>
        <begin position="46"/>
        <end position="61"/>
    </location>
</feature>
<feature type="compositionally biased region" description="Polar residues" evidence="5">
    <location>
        <begin position="109"/>
        <end position="145"/>
    </location>
</feature>
<feature type="active site" description="Proton acceptor" evidence="3 4">
    <location>
        <position position="518"/>
    </location>
</feature>
<feature type="binding site" evidence="3">
    <location>
        <begin position="394"/>
        <end position="402"/>
    </location>
    <ligand>
        <name>ATP</name>
        <dbReference type="ChEBI" id="CHEBI:30616"/>
    </ligand>
</feature>
<feature type="binding site" evidence="3">
    <location>
        <position position="417"/>
    </location>
    <ligand>
        <name>ATP</name>
        <dbReference type="ChEBI" id="CHEBI:30616"/>
    </ligand>
</feature>
<feature type="splice variant" id="VSP_053052" description="In isoform 2." evidence="7">
    <location>
        <position position="345"/>
    </location>
</feature>
<feature type="sequence conflict" description="In Ref. 1; AAK52417." evidence="8" ref="1">
    <original>C</original>
    <variation>R</variation>
    <location>
        <position position="40"/>
    </location>
</feature>
<feature type="sequence conflict" description="In Ref. 1; AAK52417." evidence="8" ref="1">
    <original>S</original>
    <variation>N</variation>
    <location>
        <position position="131"/>
    </location>
</feature>
<feature type="sequence conflict" description="In Ref. 1; AAK52417." evidence="8" ref="1">
    <original>K</original>
    <variation>M</variation>
    <location>
        <position position="145"/>
    </location>
</feature>
<feature type="sequence conflict" description="In Ref. 1; AAK52417 and 2; AAI54738." evidence="8" ref="1 2">
    <original>W</original>
    <variation>R</variation>
    <location>
        <position position="206"/>
    </location>
</feature>
<feature type="sequence conflict" description="In Ref. 1; AAK52417 and 2; AAI54738." evidence="8" ref="1 2">
    <original>I</original>
    <variation>M</variation>
    <location>
        <position position="291"/>
    </location>
</feature>
<feature type="sequence conflict" description="In Ref. 1; AAK52417." evidence="8" ref="1">
    <original>E</original>
    <variation>G</variation>
    <location>
        <position position="346"/>
    </location>
</feature>
<feature type="sequence conflict" description="In Ref. 1; AAK52417." evidence="8" ref="1">
    <original>L</original>
    <variation>P</variation>
    <location>
        <position position="362"/>
    </location>
</feature>
<proteinExistence type="evidence at transcript level"/>
<protein>
    <recommendedName>
        <fullName evidence="1">Serine/threonine-protein kinase tousled-like 2</fullName>
        <ecNumber evidence="1">2.7.11.1</ecNumber>
    </recommendedName>
    <alternativeName>
        <fullName evidence="10">PKU-alpha</fullName>
    </alternativeName>
    <alternativeName>
        <fullName evidence="11">Tousled-like kinase 2</fullName>
    </alternativeName>
</protein>
<organism>
    <name type="scientific">Danio rerio</name>
    <name type="common">Zebrafish</name>
    <name type="synonym">Brachydanio rerio</name>
    <dbReference type="NCBI Taxonomy" id="7955"/>
    <lineage>
        <taxon>Eukaryota</taxon>
        <taxon>Metazoa</taxon>
        <taxon>Chordata</taxon>
        <taxon>Craniata</taxon>
        <taxon>Vertebrata</taxon>
        <taxon>Euteleostomi</taxon>
        <taxon>Actinopterygii</taxon>
        <taxon>Neopterygii</taxon>
        <taxon>Teleostei</taxon>
        <taxon>Ostariophysi</taxon>
        <taxon>Cypriniformes</taxon>
        <taxon>Danionidae</taxon>
        <taxon>Danioninae</taxon>
        <taxon>Danio</taxon>
    </lineage>
</organism>